<reference key="1">
    <citation type="journal article" date="2009" name="PLoS Genet.">
        <title>Organised genome dynamics in the Escherichia coli species results in highly diverse adaptive paths.</title>
        <authorList>
            <person name="Touchon M."/>
            <person name="Hoede C."/>
            <person name="Tenaillon O."/>
            <person name="Barbe V."/>
            <person name="Baeriswyl S."/>
            <person name="Bidet P."/>
            <person name="Bingen E."/>
            <person name="Bonacorsi S."/>
            <person name="Bouchier C."/>
            <person name="Bouvet O."/>
            <person name="Calteau A."/>
            <person name="Chiapello H."/>
            <person name="Clermont O."/>
            <person name="Cruveiller S."/>
            <person name="Danchin A."/>
            <person name="Diard M."/>
            <person name="Dossat C."/>
            <person name="Karoui M.E."/>
            <person name="Frapy E."/>
            <person name="Garry L."/>
            <person name="Ghigo J.M."/>
            <person name="Gilles A.M."/>
            <person name="Johnson J."/>
            <person name="Le Bouguenec C."/>
            <person name="Lescat M."/>
            <person name="Mangenot S."/>
            <person name="Martinez-Jehanne V."/>
            <person name="Matic I."/>
            <person name="Nassif X."/>
            <person name="Oztas S."/>
            <person name="Petit M.A."/>
            <person name="Pichon C."/>
            <person name="Rouy Z."/>
            <person name="Ruf C.S."/>
            <person name="Schneider D."/>
            <person name="Tourret J."/>
            <person name="Vacherie B."/>
            <person name="Vallenet D."/>
            <person name="Medigue C."/>
            <person name="Rocha E.P.C."/>
            <person name="Denamur E."/>
        </authorList>
    </citation>
    <scope>NUCLEOTIDE SEQUENCE [LARGE SCALE GENOMIC DNA]</scope>
    <source>
        <strain>55989 / EAEC</strain>
    </source>
</reference>
<organism>
    <name type="scientific">Escherichia coli (strain 55989 / EAEC)</name>
    <dbReference type="NCBI Taxonomy" id="585055"/>
    <lineage>
        <taxon>Bacteria</taxon>
        <taxon>Pseudomonadati</taxon>
        <taxon>Pseudomonadota</taxon>
        <taxon>Gammaproteobacteria</taxon>
        <taxon>Enterobacterales</taxon>
        <taxon>Enterobacteriaceae</taxon>
        <taxon>Escherichia</taxon>
    </lineage>
</organism>
<evidence type="ECO:0000255" key="1">
    <source>
        <dbReference type="HAMAP-Rule" id="MF_01393"/>
    </source>
</evidence>
<keyword id="KW-0066">ATP synthesis</keyword>
<keyword id="KW-0997">Cell inner membrane</keyword>
<keyword id="KW-1003">Cell membrane</keyword>
<keyword id="KW-0138">CF(0)</keyword>
<keyword id="KW-0375">Hydrogen ion transport</keyword>
<keyword id="KW-0406">Ion transport</keyword>
<keyword id="KW-0472">Membrane</keyword>
<keyword id="KW-1185">Reference proteome</keyword>
<keyword id="KW-0812">Transmembrane</keyword>
<keyword id="KW-1133">Transmembrane helix</keyword>
<keyword id="KW-0813">Transport</keyword>
<proteinExistence type="inferred from homology"/>
<feature type="chain" id="PRO_1000184281" description="ATP synthase subunit a">
    <location>
        <begin position="1"/>
        <end position="271"/>
    </location>
</feature>
<feature type="transmembrane region" description="Helical" evidence="1">
    <location>
        <begin position="40"/>
        <end position="60"/>
    </location>
</feature>
<feature type="transmembrane region" description="Helical" evidence="1">
    <location>
        <begin position="100"/>
        <end position="120"/>
    </location>
</feature>
<feature type="transmembrane region" description="Helical" evidence="1">
    <location>
        <begin position="146"/>
        <end position="166"/>
    </location>
</feature>
<feature type="transmembrane region" description="Helical" evidence="1">
    <location>
        <begin position="220"/>
        <end position="240"/>
    </location>
</feature>
<feature type="transmembrane region" description="Helical" evidence="1">
    <location>
        <begin position="242"/>
        <end position="262"/>
    </location>
</feature>
<name>ATP6_ECO55</name>
<protein>
    <recommendedName>
        <fullName evidence="1">ATP synthase subunit a</fullName>
    </recommendedName>
    <alternativeName>
        <fullName evidence="1">ATP synthase F0 sector subunit a</fullName>
    </alternativeName>
    <alternativeName>
        <fullName evidence="1">F-ATPase subunit 6</fullName>
    </alternativeName>
</protein>
<gene>
    <name evidence="1" type="primary">atpB</name>
    <name type="ordered locus">EC55989_4213</name>
</gene>
<dbReference type="EMBL" id="CU928145">
    <property type="protein sequence ID" value="CAV00828.1"/>
    <property type="molecule type" value="Genomic_DNA"/>
</dbReference>
<dbReference type="RefSeq" id="WP_000135625.1">
    <property type="nucleotide sequence ID" value="NC_011748.1"/>
</dbReference>
<dbReference type="EMDB" id="EMD-8357"/>
<dbReference type="EMDB" id="EMD-8358"/>
<dbReference type="EMDB" id="EMD-8359"/>
<dbReference type="SMR" id="B7L888"/>
<dbReference type="GeneID" id="93778229"/>
<dbReference type="KEGG" id="eck:EC55989_4213"/>
<dbReference type="HOGENOM" id="CLU_041018_1_0_6"/>
<dbReference type="Proteomes" id="UP000000746">
    <property type="component" value="Chromosome"/>
</dbReference>
<dbReference type="GO" id="GO:0005886">
    <property type="term" value="C:plasma membrane"/>
    <property type="evidence" value="ECO:0007669"/>
    <property type="project" value="UniProtKB-SubCell"/>
</dbReference>
<dbReference type="GO" id="GO:0045259">
    <property type="term" value="C:proton-transporting ATP synthase complex"/>
    <property type="evidence" value="ECO:0007669"/>
    <property type="project" value="UniProtKB-KW"/>
</dbReference>
<dbReference type="GO" id="GO:0046933">
    <property type="term" value="F:proton-transporting ATP synthase activity, rotational mechanism"/>
    <property type="evidence" value="ECO:0007669"/>
    <property type="project" value="UniProtKB-UniRule"/>
</dbReference>
<dbReference type="GO" id="GO:0042777">
    <property type="term" value="P:proton motive force-driven plasma membrane ATP synthesis"/>
    <property type="evidence" value="ECO:0007669"/>
    <property type="project" value="TreeGrafter"/>
</dbReference>
<dbReference type="CDD" id="cd00310">
    <property type="entry name" value="ATP-synt_Fo_a_6"/>
    <property type="match status" value="1"/>
</dbReference>
<dbReference type="FunFam" id="1.20.120.220:FF:000002">
    <property type="entry name" value="ATP synthase subunit a"/>
    <property type="match status" value="1"/>
</dbReference>
<dbReference type="Gene3D" id="1.20.120.220">
    <property type="entry name" value="ATP synthase, F0 complex, subunit A"/>
    <property type="match status" value="1"/>
</dbReference>
<dbReference type="HAMAP" id="MF_01393">
    <property type="entry name" value="ATP_synth_a_bact"/>
    <property type="match status" value="1"/>
</dbReference>
<dbReference type="InterPro" id="IPR045082">
    <property type="entry name" value="ATP_syn_F0_a_bact/chloroplast"/>
</dbReference>
<dbReference type="InterPro" id="IPR000568">
    <property type="entry name" value="ATP_synth_F0_asu"/>
</dbReference>
<dbReference type="InterPro" id="IPR023011">
    <property type="entry name" value="ATP_synth_F0_asu_AS"/>
</dbReference>
<dbReference type="InterPro" id="IPR035908">
    <property type="entry name" value="F0_ATP_A_sf"/>
</dbReference>
<dbReference type="NCBIfam" id="TIGR01131">
    <property type="entry name" value="ATP_synt_6_or_A"/>
    <property type="match status" value="1"/>
</dbReference>
<dbReference type="NCBIfam" id="NF004477">
    <property type="entry name" value="PRK05815.1-1"/>
    <property type="match status" value="1"/>
</dbReference>
<dbReference type="PANTHER" id="PTHR42823">
    <property type="entry name" value="ATP SYNTHASE SUBUNIT A, CHLOROPLASTIC"/>
    <property type="match status" value="1"/>
</dbReference>
<dbReference type="PANTHER" id="PTHR42823:SF3">
    <property type="entry name" value="ATP SYNTHASE SUBUNIT A, CHLOROPLASTIC"/>
    <property type="match status" value="1"/>
</dbReference>
<dbReference type="Pfam" id="PF00119">
    <property type="entry name" value="ATP-synt_A"/>
    <property type="match status" value="1"/>
</dbReference>
<dbReference type="PRINTS" id="PR00123">
    <property type="entry name" value="ATPASEA"/>
</dbReference>
<dbReference type="SUPFAM" id="SSF81336">
    <property type="entry name" value="F1F0 ATP synthase subunit A"/>
    <property type="match status" value="1"/>
</dbReference>
<dbReference type="PROSITE" id="PS00449">
    <property type="entry name" value="ATPASE_A"/>
    <property type="match status" value="1"/>
</dbReference>
<accession>B7L888</accession>
<comment type="function">
    <text evidence="1">Key component of the proton channel; it plays a direct role in the translocation of protons across the membrane.</text>
</comment>
<comment type="subunit">
    <text evidence="1">F-type ATPases have 2 components, CF(1) - the catalytic core - and CF(0) - the membrane proton channel. CF(1) has five subunits: alpha(3), beta(3), gamma(1), delta(1), epsilon(1). CF(0) has three main subunits: a(1), b(2) and c(9-12). The alpha and beta chains form an alternating ring which encloses part of the gamma chain. CF(1) is attached to CF(0) by a central stalk formed by the gamma and epsilon chains, while a peripheral stalk is formed by the delta and b chains.</text>
</comment>
<comment type="subcellular location">
    <subcellularLocation>
        <location evidence="1">Cell inner membrane</location>
        <topology evidence="1">Multi-pass membrane protein</topology>
    </subcellularLocation>
</comment>
<comment type="similarity">
    <text evidence="1">Belongs to the ATPase A chain family.</text>
</comment>
<sequence length="271" mass="30303">MASENMTPQDYIGHHLNNLQLDLRTFSLVDPQNPPATFWTINIDSMFFSVVLGLLFLVLFRSVAKKATSGVPGKFQTAIELVIGFVNGSVKDMYHGKSKLIAPLALTIFVWVFLMNLMDLLPIDLLPYIAEHVLGLPALRVVPSADVNVTLSMALGVFILILFYSIKMKGIGGFTKELTLQPFNHWAFIPVNLILEGVSLLSKPVSLGLRLFGNMYAGELIFILIAGLLPWWSQWILNVPWAIFHILIITLQAFIFMVLTIVYLSMASEEH</sequence>